<gene>
    <name evidence="1" type="primary">dsdA</name>
    <name type="ordered locus">Ecok1_22890</name>
    <name type="ORF">APECO1_4170</name>
</gene>
<sequence>MENAKMNSLIAQYPLVEDLVALKETTWFNPGTTSLAEGLPYVGLTEQDVQDAHARLSRFAPYLAKAFPETAAAGGIIESELVAIPAMQKRLEKEYHQPIAGQLLLKKDSHLPISGSIKARGGIYEVLAHAEKLALEAGLLTLEDDYSKLLSPEFKQFFSQYSIAVGSTGNLGLSIGIMSARIGFKVTVHMSADARAWKKAKLRSHGVTVVEYEQDYGVAVEEGRKAAQSDPNCFFIDDENSRTLFLGYSVAGQRLKAQFAQQGRIVNADNPLFVYLPCGVGGGPGGVAFGLKLAFGDHVHCFFAEPTHSPCMLLGVHTGLHDQISVQDIGIDNLTAADGLAVGRASGFVGRAMERLLDGFYTLSDQTMYDMLSWLAQEEGIRLEPSALAGMAGPQRVCASVSYQQMHGFSAEQLRNATHLVWATGGGMVPEEEMNQYLAKGR</sequence>
<accession>A1ADP3</accession>
<feature type="chain" id="PRO_0000291728" description="D-serine dehydratase">
    <location>
        <begin position="1"/>
        <end position="442"/>
    </location>
</feature>
<feature type="modified residue" description="N6-(pyridoxal phosphate)lysine" evidence="1">
    <location>
        <position position="118"/>
    </location>
</feature>
<evidence type="ECO:0000255" key="1">
    <source>
        <dbReference type="HAMAP-Rule" id="MF_01030"/>
    </source>
</evidence>
<dbReference type="EC" id="4.3.1.18" evidence="1"/>
<dbReference type="EMBL" id="CP000468">
    <property type="protein sequence ID" value="ABJ01783.1"/>
    <property type="molecule type" value="Genomic_DNA"/>
</dbReference>
<dbReference type="RefSeq" id="WP_000426389.1">
    <property type="nucleotide sequence ID" value="NZ_CADILS010000022.1"/>
</dbReference>
<dbReference type="SMR" id="A1ADP3"/>
<dbReference type="KEGG" id="ecv:APECO1_4170"/>
<dbReference type="HOGENOM" id="CLU_035707_0_0_6"/>
<dbReference type="Proteomes" id="UP000008216">
    <property type="component" value="Chromosome"/>
</dbReference>
<dbReference type="GO" id="GO:0008721">
    <property type="term" value="F:D-serine ammonia-lyase activity"/>
    <property type="evidence" value="ECO:0007669"/>
    <property type="project" value="UniProtKB-EC"/>
</dbReference>
<dbReference type="GO" id="GO:0016836">
    <property type="term" value="F:hydro-lyase activity"/>
    <property type="evidence" value="ECO:0007669"/>
    <property type="project" value="UniProtKB-UniRule"/>
</dbReference>
<dbReference type="GO" id="GO:0030170">
    <property type="term" value="F:pyridoxal phosphate binding"/>
    <property type="evidence" value="ECO:0007669"/>
    <property type="project" value="InterPro"/>
</dbReference>
<dbReference type="GO" id="GO:0036088">
    <property type="term" value="P:D-serine catabolic process"/>
    <property type="evidence" value="ECO:0007669"/>
    <property type="project" value="TreeGrafter"/>
</dbReference>
<dbReference type="GO" id="GO:0009097">
    <property type="term" value="P:isoleucine biosynthetic process"/>
    <property type="evidence" value="ECO:0007669"/>
    <property type="project" value="TreeGrafter"/>
</dbReference>
<dbReference type="CDD" id="cd06447">
    <property type="entry name" value="D-Ser-dehyd"/>
    <property type="match status" value="1"/>
</dbReference>
<dbReference type="FunFam" id="3.40.50.1100:FF:000018">
    <property type="entry name" value="D-serine dehydratase"/>
    <property type="match status" value="1"/>
</dbReference>
<dbReference type="Gene3D" id="3.40.50.1100">
    <property type="match status" value="2"/>
</dbReference>
<dbReference type="HAMAP" id="MF_01030">
    <property type="entry name" value="D_Ser_dehydrat"/>
    <property type="match status" value="1"/>
</dbReference>
<dbReference type="InterPro" id="IPR011780">
    <property type="entry name" value="D_Ser_am_lyase"/>
</dbReference>
<dbReference type="InterPro" id="IPR050147">
    <property type="entry name" value="Ser/Thr_Dehydratase"/>
</dbReference>
<dbReference type="InterPro" id="IPR000634">
    <property type="entry name" value="Ser/Thr_deHydtase_PyrdxlP-BS"/>
</dbReference>
<dbReference type="InterPro" id="IPR001926">
    <property type="entry name" value="TrpB-like_PALP"/>
</dbReference>
<dbReference type="InterPro" id="IPR036052">
    <property type="entry name" value="TrpB-like_PALP_sf"/>
</dbReference>
<dbReference type="NCBIfam" id="TIGR02035">
    <property type="entry name" value="D_Ser_am_lyase"/>
    <property type="match status" value="1"/>
</dbReference>
<dbReference type="NCBIfam" id="NF002823">
    <property type="entry name" value="PRK02991.1"/>
    <property type="match status" value="1"/>
</dbReference>
<dbReference type="PANTHER" id="PTHR48078:SF9">
    <property type="entry name" value="D-SERINE DEHYDRATASE"/>
    <property type="match status" value="1"/>
</dbReference>
<dbReference type="PANTHER" id="PTHR48078">
    <property type="entry name" value="THREONINE DEHYDRATASE, MITOCHONDRIAL-RELATED"/>
    <property type="match status" value="1"/>
</dbReference>
<dbReference type="Pfam" id="PF00291">
    <property type="entry name" value="PALP"/>
    <property type="match status" value="1"/>
</dbReference>
<dbReference type="SUPFAM" id="SSF53686">
    <property type="entry name" value="Tryptophan synthase beta subunit-like PLP-dependent enzymes"/>
    <property type="match status" value="1"/>
</dbReference>
<dbReference type="PROSITE" id="PS00165">
    <property type="entry name" value="DEHYDRATASE_SER_THR"/>
    <property type="match status" value="1"/>
</dbReference>
<comment type="catalytic activity">
    <reaction evidence="1">
        <text>D-serine = pyruvate + NH4(+)</text>
        <dbReference type="Rhea" id="RHEA:13977"/>
        <dbReference type="ChEBI" id="CHEBI:15361"/>
        <dbReference type="ChEBI" id="CHEBI:28938"/>
        <dbReference type="ChEBI" id="CHEBI:35247"/>
        <dbReference type="EC" id="4.3.1.18"/>
    </reaction>
</comment>
<comment type="cofactor">
    <cofactor evidence="1">
        <name>pyridoxal 5'-phosphate</name>
        <dbReference type="ChEBI" id="CHEBI:597326"/>
    </cofactor>
</comment>
<comment type="subunit">
    <text evidence="1">Monomer.</text>
</comment>
<comment type="similarity">
    <text evidence="1">Belongs to the serine/threonine dehydratase family. DsdA subfamily.</text>
</comment>
<organism>
    <name type="scientific">Escherichia coli O1:K1 / APEC</name>
    <dbReference type="NCBI Taxonomy" id="405955"/>
    <lineage>
        <taxon>Bacteria</taxon>
        <taxon>Pseudomonadati</taxon>
        <taxon>Pseudomonadota</taxon>
        <taxon>Gammaproteobacteria</taxon>
        <taxon>Enterobacterales</taxon>
        <taxon>Enterobacteriaceae</taxon>
        <taxon>Escherichia</taxon>
    </lineage>
</organism>
<reference key="1">
    <citation type="journal article" date="2007" name="J. Bacteriol.">
        <title>The genome sequence of avian pathogenic Escherichia coli strain O1:K1:H7 shares strong similarities with human extraintestinal pathogenic E. coli genomes.</title>
        <authorList>
            <person name="Johnson T.J."/>
            <person name="Kariyawasam S."/>
            <person name="Wannemuehler Y."/>
            <person name="Mangiamele P."/>
            <person name="Johnson S.J."/>
            <person name="Doetkott C."/>
            <person name="Skyberg J.A."/>
            <person name="Lynne A.M."/>
            <person name="Johnson J.R."/>
            <person name="Nolan L.K."/>
        </authorList>
    </citation>
    <scope>NUCLEOTIDE SEQUENCE [LARGE SCALE GENOMIC DNA]</scope>
</reference>
<proteinExistence type="inferred from homology"/>
<name>SDHD_ECOK1</name>
<protein>
    <recommendedName>
        <fullName evidence="1">D-serine dehydratase</fullName>
        <ecNumber evidence="1">4.3.1.18</ecNumber>
    </recommendedName>
    <alternativeName>
        <fullName evidence="1">D-serine deaminase</fullName>
        <shortName evidence="1">DSD</shortName>
    </alternativeName>
</protein>
<keyword id="KW-0456">Lyase</keyword>
<keyword id="KW-0663">Pyridoxal phosphate</keyword>
<keyword id="KW-1185">Reference proteome</keyword>